<comment type="function">
    <text evidence="1">One of two assembly initiator proteins, it binds directly to the 5'-end of the 23S rRNA, where it nucleates assembly of the 50S subunit.</text>
</comment>
<comment type="function">
    <text evidence="1">One of the proteins that surrounds the polypeptide exit tunnel on the outside of the subunit.</text>
</comment>
<comment type="subunit">
    <text evidence="1">Part of the 50S ribosomal subunit.</text>
</comment>
<comment type="similarity">
    <text evidence="2">Belongs to the universal ribosomal protein uL24 family.</text>
</comment>
<feature type="chain" id="PRO_0000403663" description="Large ribosomal subunit protein uL24">
    <location>
        <begin position="1"/>
        <end position="103"/>
    </location>
</feature>
<feature type="sequence conflict" description="In Ref. 1; AAB59024." evidence="2" ref="1">
    <original>I</original>
    <variation>T</variation>
    <location>
        <position position="12"/>
    </location>
</feature>
<proteinExistence type="inferred from homology"/>
<organism>
    <name type="scientific">Bacillus spizizenii (strain ATCC 23059 / NRRL B-14472 / W23)</name>
    <name type="common">Bacillus subtilis subsp. spizizenii</name>
    <dbReference type="NCBI Taxonomy" id="655816"/>
    <lineage>
        <taxon>Bacteria</taxon>
        <taxon>Bacillati</taxon>
        <taxon>Bacillota</taxon>
        <taxon>Bacilli</taxon>
        <taxon>Bacillales</taxon>
        <taxon>Bacillaceae</taxon>
        <taxon>Bacillus</taxon>
    </lineage>
</organism>
<evidence type="ECO:0000250" key="1"/>
<evidence type="ECO:0000305" key="2"/>
<accession>E0TZF9</accession>
<accession>P12876</accession>
<gene>
    <name type="primary">rplX</name>
    <name type="ordered locus">BSUW23_00645</name>
</gene>
<protein>
    <recommendedName>
        <fullName evidence="2">Large ribosomal subunit protein uL24</fullName>
    </recommendedName>
    <alternativeName>
        <fullName>50S ribosomal protein L24</fullName>
    </alternativeName>
</protein>
<dbReference type="EMBL" id="M81749">
    <property type="protein sequence ID" value="AAB59024.1"/>
    <property type="molecule type" value="Genomic_DNA"/>
</dbReference>
<dbReference type="EMBL" id="CP002183">
    <property type="protein sequence ID" value="ADM36187.1"/>
    <property type="molecule type" value="Genomic_DNA"/>
</dbReference>
<dbReference type="PIR" id="S05993">
    <property type="entry name" value="R5BS2B"/>
</dbReference>
<dbReference type="RefSeq" id="WP_003156486.1">
    <property type="nucleotide sequence ID" value="NZ_CP148102.1"/>
</dbReference>
<dbReference type="SMR" id="E0TZF9"/>
<dbReference type="GeneID" id="93079291"/>
<dbReference type="KEGG" id="bss:BSUW23_00645"/>
<dbReference type="HOGENOM" id="CLU_093315_2_0_9"/>
<dbReference type="Proteomes" id="UP000002233">
    <property type="component" value="Chromosome"/>
</dbReference>
<dbReference type="GO" id="GO:1990904">
    <property type="term" value="C:ribonucleoprotein complex"/>
    <property type="evidence" value="ECO:0007669"/>
    <property type="project" value="UniProtKB-KW"/>
</dbReference>
<dbReference type="GO" id="GO:0005840">
    <property type="term" value="C:ribosome"/>
    <property type="evidence" value="ECO:0007669"/>
    <property type="project" value="UniProtKB-KW"/>
</dbReference>
<dbReference type="GO" id="GO:0003677">
    <property type="term" value="F:DNA binding"/>
    <property type="evidence" value="ECO:0007669"/>
    <property type="project" value="UniProtKB-KW"/>
</dbReference>
<dbReference type="GO" id="GO:0019843">
    <property type="term" value="F:rRNA binding"/>
    <property type="evidence" value="ECO:0007669"/>
    <property type="project" value="UniProtKB-UniRule"/>
</dbReference>
<dbReference type="GO" id="GO:0003735">
    <property type="term" value="F:structural constituent of ribosome"/>
    <property type="evidence" value="ECO:0007669"/>
    <property type="project" value="InterPro"/>
</dbReference>
<dbReference type="GO" id="GO:0006412">
    <property type="term" value="P:translation"/>
    <property type="evidence" value="ECO:0007669"/>
    <property type="project" value="UniProtKB-UniRule"/>
</dbReference>
<dbReference type="CDD" id="cd06089">
    <property type="entry name" value="KOW_RPL26"/>
    <property type="match status" value="1"/>
</dbReference>
<dbReference type="FunFam" id="2.30.30.30:FF:000004">
    <property type="entry name" value="50S ribosomal protein L24"/>
    <property type="match status" value="1"/>
</dbReference>
<dbReference type="Gene3D" id="2.30.30.30">
    <property type="match status" value="1"/>
</dbReference>
<dbReference type="HAMAP" id="MF_01326_B">
    <property type="entry name" value="Ribosomal_uL24_B"/>
    <property type="match status" value="1"/>
</dbReference>
<dbReference type="InterPro" id="IPR005824">
    <property type="entry name" value="KOW"/>
</dbReference>
<dbReference type="InterPro" id="IPR014722">
    <property type="entry name" value="Rib_uL2_dom2"/>
</dbReference>
<dbReference type="InterPro" id="IPR003256">
    <property type="entry name" value="Ribosomal_uL24"/>
</dbReference>
<dbReference type="InterPro" id="IPR005825">
    <property type="entry name" value="Ribosomal_uL24_CS"/>
</dbReference>
<dbReference type="InterPro" id="IPR041988">
    <property type="entry name" value="Ribosomal_uL24_KOW"/>
</dbReference>
<dbReference type="InterPro" id="IPR008991">
    <property type="entry name" value="Translation_prot_SH3-like_sf"/>
</dbReference>
<dbReference type="NCBIfam" id="TIGR01079">
    <property type="entry name" value="rplX_bact"/>
    <property type="match status" value="1"/>
</dbReference>
<dbReference type="PANTHER" id="PTHR12903">
    <property type="entry name" value="MITOCHONDRIAL RIBOSOMAL PROTEIN L24"/>
    <property type="match status" value="1"/>
</dbReference>
<dbReference type="Pfam" id="PF00467">
    <property type="entry name" value="KOW"/>
    <property type="match status" value="1"/>
</dbReference>
<dbReference type="Pfam" id="PF17136">
    <property type="entry name" value="ribosomal_L24"/>
    <property type="match status" value="1"/>
</dbReference>
<dbReference type="SMART" id="SM00739">
    <property type="entry name" value="KOW"/>
    <property type="match status" value="1"/>
</dbReference>
<dbReference type="SUPFAM" id="SSF50104">
    <property type="entry name" value="Translation proteins SH3-like domain"/>
    <property type="match status" value="1"/>
</dbReference>
<dbReference type="PROSITE" id="PS01108">
    <property type="entry name" value="RIBOSOMAL_L24"/>
    <property type="match status" value="1"/>
</dbReference>
<name>RL24_BACSH</name>
<reference key="1">
    <citation type="journal article" date="1992" name="J. Gen. Microbiol.">
        <title>DNA sequence variability at the rplX locus of Bacillus subtilis.</title>
        <authorList>
            <person name="Sharp P.M."/>
            <person name="Nolan N.C."/>
            <person name="Ni Cholmain N."/>
            <person name="Devine K.M."/>
        </authorList>
    </citation>
    <scope>NUCLEOTIDE SEQUENCE [GENOMIC DNA]</scope>
    <source>
        <strain>ATCC 23059 / NRRL B-14472 / W23</strain>
    </source>
</reference>
<reference key="2">
    <citation type="journal article" date="2011" name="Microbiology">
        <title>The genome sequence of Bacillus subtilis subsp. spizizenii W23: insights into speciation within the B. subtilis complex and into the history of B. subtilis genetics.</title>
        <authorList>
            <person name="Zeigler D.R."/>
        </authorList>
    </citation>
    <scope>NUCLEOTIDE SEQUENCE [LARGE SCALE GENOMIC DNA]</scope>
    <source>
        <strain>ATCC 23059 / NRRL B-14472 / W23</strain>
    </source>
</reference>
<keyword id="KW-0238">DNA-binding</keyword>
<keyword id="KW-0687">Ribonucleoprotein</keyword>
<keyword id="KW-0689">Ribosomal protein</keyword>
<keyword id="KW-0694">RNA-binding</keyword>
<keyword id="KW-0699">rRNA-binding</keyword>
<sequence length="103" mass="11142">MHVKKGDKVMVISGKDKGKQGTILAAFPKKDRVLVEGVNMVKKHSKPTQANPQGGISNQEAPIHVSNVMPLDPKTGEVTRVGYKVEDGKKVRVAKKSGQVLDK</sequence>